<dbReference type="EMBL" id="CU329671">
    <property type="protein sequence ID" value="CAA17887.1"/>
    <property type="molecule type" value="Genomic_DNA"/>
</dbReference>
<dbReference type="PIR" id="T40146">
    <property type="entry name" value="T40146"/>
</dbReference>
<dbReference type="RefSeq" id="NP_596436.1">
    <property type="nucleotide sequence ID" value="NM_001022355.2"/>
</dbReference>
<dbReference type="BioGRID" id="276995">
    <property type="interactions" value="36"/>
</dbReference>
<dbReference type="ComplexPortal" id="CPX-10315">
    <property type="entry name" value="37S mitochondrial small ribosomal subunit"/>
</dbReference>
<dbReference type="FunCoup" id="O43006">
    <property type="interactions" value="45"/>
</dbReference>
<dbReference type="STRING" id="284812.O43006"/>
<dbReference type="PaxDb" id="4896-SPBC2G2.07c.1"/>
<dbReference type="EnsemblFungi" id="SPBC2G2.07c.1">
    <property type="protein sequence ID" value="SPBC2G2.07c.1:pep"/>
    <property type="gene ID" value="SPBC2G2.07c"/>
</dbReference>
<dbReference type="GeneID" id="2540467"/>
<dbReference type="KEGG" id="spo:2540467"/>
<dbReference type="PomBase" id="SPBC2G2.07c">
    <property type="gene designation" value="mug178"/>
</dbReference>
<dbReference type="VEuPathDB" id="FungiDB:SPBC2G2.07c"/>
<dbReference type="eggNOG" id="ENOG502SBK0">
    <property type="taxonomic scope" value="Eukaryota"/>
</dbReference>
<dbReference type="HOGENOM" id="CLU_1185618_0_0_1"/>
<dbReference type="InParanoid" id="O43006"/>
<dbReference type="OMA" id="EDYDKFA"/>
<dbReference type="PRO" id="PR:O43006"/>
<dbReference type="Proteomes" id="UP000002485">
    <property type="component" value="Chromosome II"/>
</dbReference>
<dbReference type="GO" id="GO:0005763">
    <property type="term" value="C:mitochondrial small ribosomal subunit"/>
    <property type="evidence" value="ECO:0000318"/>
    <property type="project" value="GO_Central"/>
</dbReference>
<dbReference type="GO" id="GO:0003735">
    <property type="term" value="F:structural constituent of ribosome"/>
    <property type="evidence" value="ECO:0000318"/>
    <property type="project" value="GO_Central"/>
</dbReference>
<dbReference type="GO" id="GO:0051321">
    <property type="term" value="P:meiotic cell cycle"/>
    <property type="evidence" value="ECO:0007669"/>
    <property type="project" value="UniProtKB-KW"/>
</dbReference>
<dbReference type="GO" id="GO:0070124">
    <property type="term" value="P:mitochondrial translational initiation"/>
    <property type="evidence" value="ECO:0000315"/>
    <property type="project" value="UniProtKB"/>
</dbReference>
<dbReference type="InterPro" id="IPR016712">
    <property type="entry name" value="Rbsml_bS1m-like"/>
</dbReference>
<dbReference type="PANTHER" id="PTHR28058">
    <property type="entry name" value="37S RIBOSOMAL PROTEIN MRP51, MITOCHONDRIAL"/>
    <property type="match status" value="1"/>
</dbReference>
<dbReference type="PANTHER" id="PTHR28058:SF1">
    <property type="entry name" value="SMALL RIBOSOMAL SUBUNIT PROTEIN BS1M"/>
    <property type="match status" value="1"/>
</dbReference>
<dbReference type="Pfam" id="PF11709">
    <property type="entry name" value="Mit_ribos_Mrp51"/>
    <property type="match status" value="1"/>
</dbReference>
<protein>
    <recommendedName>
        <fullName evidence="6">Small ribosomal subunit protein L51-b</fullName>
    </recommendedName>
    <alternativeName>
        <fullName>Meiotically up-regulated gene 178 protein</fullName>
    </alternativeName>
</protein>
<accession>O43006</accession>
<gene>
    <name evidence="6" type="primary">mug178</name>
    <name evidence="6" type="ORF">SPBC2G2.07c</name>
</gene>
<keyword id="KW-0469">Meiosis</keyword>
<keyword id="KW-0496">Mitochondrion</keyword>
<keyword id="KW-1185">Reference proteome</keyword>
<keyword id="KW-0687">Ribonucleoprotein</keyword>
<keyword id="KW-0689">Ribosomal protein</keyword>
<keyword id="KW-0809">Transit peptide</keyword>
<comment type="function">
    <text evidence="1 3 4">Component of the mitochondrial ribosome (mitoribosome), a dedicated translation machinery responsible for the synthesis of mitochondrial genome-encoded proteins, including at least some of the essential transmembrane subunits of the mitochondrial respiratory chain. The mitoribosomes are attached to the mitochondrial inner membrane and translation products are cotranslationally integrated into the membrane (By similarity). Functionally interacts with the 5'-UTR of mitochondrial mRNAs (By similarity). Specifically plays a role in the translation of cob1/cytochrome b and cox3 (PubMed:34634819). Has a role in meiosis (PubMed:16303567).</text>
</comment>
<comment type="subunit">
    <text evidence="1 4">Component of the mitochondrial small ribosomal subunit (mt-SSU) (PubMed:34634819). Mature yeast 74S mitochondrial ribosomes consist of a small (37S) and a large (54S) subunit. The 37S small subunit contains a 15S ribosomal RNA (15S mt-rRNA) and at least 32 different proteins. The 54S large subunit contains a 21S rRNA (21S mt-rRNA) and at least 45 different proteins (By similarity). This subunit is mutually exclusive with mrp51/small ribosomal subunit protein bS1m (PubMed:34634819).</text>
</comment>
<comment type="subcellular location">
    <subcellularLocation>
        <location evidence="4">Mitochondrion</location>
    </subcellularLocation>
</comment>
<comment type="disruption phenotype">
    <text evidence="4">Severely decreases cytochrome c oxidase activity (PubMed:34634819). Increases degradation of cytochrome b cob1 protein, and decreases synthesis of cytochrome c oxidase subunit cox3 (PubMed:34634819). Cytochromes b and c1 appear absent from cell (PubMed:34634819). Abolishes growth on the non-fermentable carbon source galactose (PubMed:34634819).</text>
</comment>
<comment type="similarity">
    <text evidence="5">Belongs to the bacterial ribosomal protein bS1 family.</text>
</comment>
<organism>
    <name type="scientific">Schizosaccharomyces pombe (strain 972 / ATCC 24843)</name>
    <name type="common">Fission yeast</name>
    <dbReference type="NCBI Taxonomy" id="284812"/>
    <lineage>
        <taxon>Eukaryota</taxon>
        <taxon>Fungi</taxon>
        <taxon>Dikarya</taxon>
        <taxon>Ascomycota</taxon>
        <taxon>Taphrinomycotina</taxon>
        <taxon>Schizosaccharomycetes</taxon>
        <taxon>Schizosaccharomycetales</taxon>
        <taxon>Schizosaccharomycetaceae</taxon>
        <taxon>Schizosaccharomyces</taxon>
    </lineage>
</organism>
<name>RT51B_SCHPO</name>
<evidence type="ECO:0000250" key="1">
    <source>
        <dbReference type="UniProtKB" id="Q02950"/>
    </source>
</evidence>
<evidence type="ECO:0000255" key="2"/>
<evidence type="ECO:0000269" key="3">
    <source>
    </source>
</evidence>
<evidence type="ECO:0000269" key="4">
    <source>
    </source>
</evidence>
<evidence type="ECO:0000305" key="5"/>
<evidence type="ECO:0000312" key="6">
    <source>
        <dbReference type="PomBase" id="SPBC2G2.07c"/>
    </source>
</evidence>
<feature type="transit peptide" description="Mitochondrion" evidence="2">
    <location>
        <begin position="1"/>
        <end position="84"/>
    </location>
</feature>
<feature type="chain" id="PRO_0000116520" description="Small ribosomal subunit protein L51-b">
    <location>
        <begin position="85"/>
        <end position="225"/>
    </location>
</feature>
<reference key="1">
    <citation type="journal article" date="2002" name="Nature">
        <title>The genome sequence of Schizosaccharomyces pombe.</title>
        <authorList>
            <person name="Wood V."/>
            <person name="Gwilliam R."/>
            <person name="Rajandream M.A."/>
            <person name="Lyne M.H."/>
            <person name="Lyne R."/>
            <person name="Stewart A."/>
            <person name="Sgouros J.G."/>
            <person name="Peat N."/>
            <person name="Hayles J."/>
            <person name="Baker S.G."/>
            <person name="Basham D."/>
            <person name="Bowman S."/>
            <person name="Brooks K."/>
            <person name="Brown D."/>
            <person name="Brown S."/>
            <person name="Chillingworth T."/>
            <person name="Churcher C.M."/>
            <person name="Collins M."/>
            <person name="Connor R."/>
            <person name="Cronin A."/>
            <person name="Davis P."/>
            <person name="Feltwell T."/>
            <person name="Fraser A."/>
            <person name="Gentles S."/>
            <person name="Goble A."/>
            <person name="Hamlin N."/>
            <person name="Harris D.E."/>
            <person name="Hidalgo J."/>
            <person name="Hodgson G."/>
            <person name="Holroyd S."/>
            <person name="Hornsby T."/>
            <person name="Howarth S."/>
            <person name="Huckle E.J."/>
            <person name="Hunt S."/>
            <person name="Jagels K."/>
            <person name="James K.D."/>
            <person name="Jones L."/>
            <person name="Jones M."/>
            <person name="Leather S."/>
            <person name="McDonald S."/>
            <person name="McLean J."/>
            <person name="Mooney P."/>
            <person name="Moule S."/>
            <person name="Mungall K.L."/>
            <person name="Murphy L.D."/>
            <person name="Niblett D."/>
            <person name="Odell C."/>
            <person name="Oliver K."/>
            <person name="O'Neil S."/>
            <person name="Pearson D."/>
            <person name="Quail M.A."/>
            <person name="Rabbinowitsch E."/>
            <person name="Rutherford K.M."/>
            <person name="Rutter S."/>
            <person name="Saunders D."/>
            <person name="Seeger K."/>
            <person name="Sharp S."/>
            <person name="Skelton J."/>
            <person name="Simmonds M.N."/>
            <person name="Squares R."/>
            <person name="Squares S."/>
            <person name="Stevens K."/>
            <person name="Taylor K."/>
            <person name="Taylor R.G."/>
            <person name="Tivey A."/>
            <person name="Walsh S.V."/>
            <person name="Warren T."/>
            <person name="Whitehead S."/>
            <person name="Woodward J.R."/>
            <person name="Volckaert G."/>
            <person name="Aert R."/>
            <person name="Robben J."/>
            <person name="Grymonprez B."/>
            <person name="Weltjens I."/>
            <person name="Vanstreels E."/>
            <person name="Rieger M."/>
            <person name="Schaefer M."/>
            <person name="Mueller-Auer S."/>
            <person name="Gabel C."/>
            <person name="Fuchs M."/>
            <person name="Duesterhoeft A."/>
            <person name="Fritzc C."/>
            <person name="Holzer E."/>
            <person name="Moestl D."/>
            <person name="Hilbert H."/>
            <person name="Borzym K."/>
            <person name="Langer I."/>
            <person name="Beck A."/>
            <person name="Lehrach H."/>
            <person name="Reinhardt R."/>
            <person name="Pohl T.M."/>
            <person name="Eger P."/>
            <person name="Zimmermann W."/>
            <person name="Wedler H."/>
            <person name="Wambutt R."/>
            <person name="Purnelle B."/>
            <person name="Goffeau A."/>
            <person name="Cadieu E."/>
            <person name="Dreano S."/>
            <person name="Gloux S."/>
            <person name="Lelaure V."/>
            <person name="Mottier S."/>
            <person name="Galibert F."/>
            <person name="Aves S.J."/>
            <person name="Xiang Z."/>
            <person name="Hunt C."/>
            <person name="Moore K."/>
            <person name="Hurst S.M."/>
            <person name="Lucas M."/>
            <person name="Rochet M."/>
            <person name="Gaillardin C."/>
            <person name="Tallada V.A."/>
            <person name="Garzon A."/>
            <person name="Thode G."/>
            <person name="Daga R.R."/>
            <person name="Cruzado L."/>
            <person name="Jimenez J."/>
            <person name="Sanchez M."/>
            <person name="del Rey F."/>
            <person name="Benito J."/>
            <person name="Dominguez A."/>
            <person name="Revuelta J.L."/>
            <person name="Moreno S."/>
            <person name="Armstrong J."/>
            <person name="Forsburg S.L."/>
            <person name="Cerutti L."/>
            <person name="Lowe T."/>
            <person name="McCombie W.R."/>
            <person name="Paulsen I."/>
            <person name="Potashkin J."/>
            <person name="Shpakovski G.V."/>
            <person name="Ussery D."/>
            <person name="Barrell B.G."/>
            <person name="Nurse P."/>
        </authorList>
    </citation>
    <scope>NUCLEOTIDE SEQUENCE [LARGE SCALE GENOMIC DNA]</scope>
    <source>
        <strain>972 / ATCC 24843</strain>
    </source>
</reference>
<reference key="2">
    <citation type="journal article" date="2005" name="Curr. Biol.">
        <title>A large-scale screen in S. pombe identifies seven novel genes required for critical meiotic events.</title>
        <authorList>
            <person name="Martin-Castellanos C."/>
            <person name="Blanco M."/>
            <person name="Rozalen A.E."/>
            <person name="Perez-Hidalgo L."/>
            <person name="Garcia A.I."/>
            <person name="Conde F."/>
            <person name="Mata J."/>
            <person name="Ellermeier C."/>
            <person name="Davis L."/>
            <person name="San-Segundo P."/>
            <person name="Smith G.R."/>
            <person name="Moreno S."/>
        </authorList>
    </citation>
    <scope>FUNCTION IN MEIOSIS</scope>
</reference>
<reference key="3">
    <citation type="journal article" date="2021" name="Nucleic Acids Res.">
        <title>Translational activators and mitoribosomal isoforms cooperate to mediate mRNA-specific translation in Schizosaccharomyces pombe mitochondria.</title>
        <authorList>
            <person name="Herbert C.J."/>
            <person name="Labarre-Mariotte S."/>
            <person name="Cornu D."/>
            <person name="Sophie C."/>
            <person name="Panozzo C."/>
            <person name="Michel T."/>
            <person name="Dujardin G."/>
            <person name="Bonnefoy N."/>
        </authorList>
    </citation>
    <scope>FUNCTION</scope>
    <scope>SUBUNIT</scope>
    <scope>SUBCELLULAR LOCATION</scope>
    <scope>DISRUPTION PHENOTYPE</scope>
</reference>
<sequence length="225" mass="25672">MKFPDLLRCSRAVSLARPDLPRNSPDVYDTKIPILQAITAKKCQRFRGDWGAKRKLPILKNRHISIQKFDTFEHQCAFISSDRFVRTLKRIYDLKLPVPLNDYEQISPYLLQKYNTFSSSNPKSRPTLPPGILYAKLKLLDSFSDSEKKRLSLVSFIQTKKVPLPFTYGKFAPDSKECLFGVSGVIAATSLKGITSTKNRYVIRSLNVDETGKTIPNITRENRSI</sequence>
<proteinExistence type="evidence at protein level"/>